<keyword id="KW-0261">Viral envelope protein</keyword>
<keyword id="KW-0468">Viral matrix protein</keyword>
<keyword id="KW-0946">Virion</keyword>
<feature type="chain" id="PRO_0000142765" description="Matrix protein">
    <location>
        <begin position="1"/>
        <end position="351"/>
    </location>
</feature>
<comment type="function">
    <text>Plays a crucial role in virus assembly and interacts with the RNP complex as well as with the viral membrane.</text>
</comment>
<comment type="subcellular location">
    <subcellularLocation>
        <location evidence="1">Virion</location>
    </subcellularLocation>
</comment>
<comment type="similarity">
    <text evidence="1">Belongs to the morbillivirus/respirovirus/rubulavirus M protein family.</text>
</comment>
<accession>P06166</accession>
<proteinExistence type="inferred from homology"/>
<organismHost>
    <name type="scientific">Bos taurus</name>
    <name type="common">Bovine</name>
    <dbReference type="NCBI Taxonomy" id="9913"/>
</organismHost>
<name>MATRX_PI3B</name>
<reference key="1">
    <citation type="journal article" date="1987" name="Nucleic Acids Res.">
        <title>Nucleotide sequence of the bovine parainfluenza 3 virus genome: its 3' end and the genes of NP, P, C and M proteins.</title>
        <authorList>
            <person name="Sakai Y."/>
            <person name="Suzu S."/>
            <person name="Shioda T."/>
            <person name="Shibuta H."/>
        </authorList>
    </citation>
    <scope>NUCLEOTIDE SEQUENCE [GENOMIC RNA]</scope>
    <source>
        <strain>910N</strain>
    </source>
</reference>
<protein>
    <recommendedName>
        <fullName>Matrix protein</fullName>
    </recommendedName>
</protein>
<gene>
    <name type="primary">M</name>
</gene>
<sequence length="351" mass="39310">MSITNSAIYTFPESSFSDNGNIEPLPLKVNEQRKAVPHIRVVRIGDPPKHGSRYLDVFLLGFFEMERSKDRYGSVSDLDDDPSYKVCGSGSLPLGLARYTGNDQELLQAATKLDIEVRRTVKATEMIVYTVQNIKPELYPWSSRLRKGMLFDANKVALAPQCLPLDRGIKFRVIFVNCTAIGSITLFKIPKSMALLSLPNTISINLQVHIKTGIQTDSKGVVQILDEKGEKSLNFMVHLGLIKRKMGRMYSVEYCKQKIEKMRLLFSLGLVGGISLHVNATGSISKTLASQLAFKREICYPLMDLNPHLNLVIWASSVEITRVDAIFQPSLPGEFRYYPNIIAKGVGKIRQ</sequence>
<dbReference type="EMBL" id="Y00114">
    <property type="protein sequence ID" value="CAA68296.1"/>
    <property type="molecule type" value="Genomic_RNA"/>
</dbReference>
<dbReference type="EMBL" id="D84095">
    <property type="protein sequence ID" value="BAA12216.1"/>
    <property type="molecule type" value="Genomic_RNA"/>
</dbReference>
<dbReference type="SMR" id="P06166"/>
<dbReference type="Proteomes" id="UP000133413">
    <property type="component" value="Genome"/>
</dbReference>
<dbReference type="GO" id="GO:0019031">
    <property type="term" value="C:viral envelope"/>
    <property type="evidence" value="ECO:0007669"/>
    <property type="project" value="UniProtKB-KW"/>
</dbReference>
<dbReference type="GO" id="GO:0039660">
    <property type="term" value="F:structural constituent of virion"/>
    <property type="evidence" value="ECO:0007669"/>
    <property type="project" value="UniProtKB-KW"/>
</dbReference>
<dbReference type="GO" id="GO:0019068">
    <property type="term" value="P:virion assembly"/>
    <property type="evidence" value="ECO:0007669"/>
    <property type="project" value="InterPro"/>
</dbReference>
<dbReference type="Gene3D" id="2.70.20.60">
    <property type="entry name" value="Viral matrix protein, C-terminal domain"/>
    <property type="match status" value="1"/>
</dbReference>
<dbReference type="Gene3D" id="2.70.20.50">
    <property type="entry name" value="Viral matrix protein, N-terminal domain"/>
    <property type="match status" value="1"/>
</dbReference>
<dbReference type="InterPro" id="IPR042539">
    <property type="entry name" value="Matrix_C"/>
</dbReference>
<dbReference type="InterPro" id="IPR042540">
    <property type="entry name" value="Matrix_N"/>
</dbReference>
<dbReference type="InterPro" id="IPR055413">
    <property type="entry name" value="Matrix_Paramyxo_C"/>
</dbReference>
<dbReference type="InterPro" id="IPR000982">
    <property type="entry name" value="Matrix_Paramyxo_N"/>
</dbReference>
<dbReference type="Pfam" id="PF23765">
    <property type="entry name" value="Matrix_Paramyxo_C"/>
    <property type="match status" value="1"/>
</dbReference>
<dbReference type="Pfam" id="PF00661">
    <property type="entry name" value="Matrix_Paramyxo_N"/>
    <property type="match status" value="1"/>
</dbReference>
<evidence type="ECO:0000305" key="1"/>
<organism>
    <name type="scientific">Bovine parainfluenza 3 virus</name>
    <name type="common">BPIV-3</name>
    <dbReference type="NCBI Taxonomy" id="3052729"/>
    <lineage>
        <taxon>Viruses</taxon>
        <taxon>Riboviria</taxon>
        <taxon>Orthornavirae</taxon>
        <taxon>Negarnaviricota</taxon>
        <taxon>Haploviricotina</taxon>
        <taxon>Monjiviricetes</taxon>
        <taxon>Mononegavirales</taxon>
        <taxon>Paramyxoviridae</taxon>
        <taxon>Feraresvirinae</taxon>
        <taxon>Respirovirus</taxon>
    </lineage>
</organism>